<keyword id="KW-0002">3D-structure</keyword>
<keyword id="KW-0030">Aminoacyl-tRNA synthetase</keyword>
<keyword id="KW-0067">ATP-binding</keyword>
<keyword id="KW-0175">Coiled coil</keyword>
<keyword id="KW-0963">Cytoplasm</keyword>
<keyword id="KW-0436">Ligase</keyword>
<keyword id="KW-0479">Metal-binding</keyword>
<keyword id="KW-0547">Nucleotide-binding</keyword>
<keyword id="KW-0648">Protein biosynthesis</keyword>
<keyword id="KW-0862">Zinc</keyword>
<sequence>MDLPKAYDPKSVEPKWAEKWAKNPFVANPKSGKPPFVIFMPPPNVTGSLHMGHALDNSLQDALIRYKRMRGFEAVWLPGTDHAGIATQVVVERLLLKEGKTRHDLGREKFLERVWQWKEESGGTILKQLKRLGASADWSREAFTMDEKRSRAVRYAFSRYYHEGLAYRAPRLVNWCPRCETTLSDLEVETEPTPGKLYTLRYEVEGGGFIEIATVRPETVFADQAIAVHPEDERYRHLLGKRARIPLTEVWIPILADPAVEKDFGTGALKVTPAHDPLDYEIGERHGLKPVSVINLEGRMEGERVPEALRGLDRFEARRKAVELFREAGHLVKEEDYTIALATCSRCGTPIEYAIFPQWWLRMRPLAEEVLKGLRRGDIAFVPERWKKVNMDWLENVKDWNISRQLWWGHQIPAWYCEDCQAVNVPRPERYLEDPTSCEACGSPRLKRDEDVFDTWFSSALWPLSTLGWPEETEDLKAFYPGDVLVTGYDILFLWVSRMEVSGYHFMGERPFKTVLLHGLVLDEKGQKMSKSKGNVIDPLEMVERYGADALRFALIYLATGGQDIRLDLRWLEMARNFANKLYNAARFVLLSREGFQAKEDTPTLADRFMRSRLSRGVEEITALYEALDLAQAAREVYELVWSEFCDWYLEAAKPALKAGNAHTLRTLEEVLAVLLKLLHPMMPFLTSELYQALTGKEELALEAWPEPGGRDEEAERAFEALKQAVTAVRALKAEAGLPPAQEVRVYLEGETAPVEENLEVFRFLSRADLLPERPAKALVKAMPRVTARMPLEGLLDVEEWRRRQEKRLKELLALAERSQRKLASPGFREKAPKEVVEAEEARLKENLEQAERIREALSQIG</sequence>
<organism>
    <name type="scientific">Thermus thermophilus</name>
    <dbReference type="NCBI Taxonomy" id="274"/>
    <lineage>
        <taxon>Bacteria</taxon>
        <taxon>Thermotogati</taxon>
        <taxon>Deinococcota</taxon>
        <taxon>Deinococci</taxon>
        <taxon>Thermales</taxon>
        <taxon>Thermaceae</taxon>
        <taxon>Thermus</taxon>
    </lineage>
</organism>
<reference key="1">
    <citation type="submission" date="2002-02" db="EMBL/GenBank/DDBJ databases">
        <authorList>
            <person name="Fukai S."/>
            <person name="Nureki O."/>
            <person name="Sekine S."/>
            <person name="Shimada A."/>
            <person name="Vassylyev D.G."/>
            <person name="Yokoyama S."/>
        </authorList>
    </citation>
    <scope>NUCLEOTIDE SEQUENCE [GENOMIC DNA]</scope>
</reference>
<reference evidence="9" key="2">
    <citation type="journal article" date="2000" name="Cell">
        <title>Structural basis for double-sieve discrimination of L-valine from L-isoleucine and L-threonine by the complex of tRNA(Val) and valyl-tRNA synthetase.</title>
        <authorList>
            <person name="Fukai S."/>
            <person name="Nureki O."/>
            <person name="Sekine S."/>
            <person name="Shimada A."/>
            <person name="Tao J."/>
            <person name="Vassylyev D.G."/>
            <person name="Yokoyama S."/>
        </authorList>
    </citation>
    <scope>X-RAY CRYSTALLOGRAPHY (2.9 ANGSTROMS) IN COMPLEX WITH TRNA(VAL) AND VAL-AMP ANALOG</scope>
</reference>
<reference evidence="10 11" key="3">
    <citation type="journal article" date="2003" name="RNA">
        <title>Mechanism of molecular interactions for tRNA(Val) recognition by valyl-tRNA synthetase.</title>
        <authorList>
            <person name="Fukai S."/>
            <person name="Nureki O."/>
            <person name="Sekine S."/>
            <person name="Shimada A."/>
            <person name="Vassylyev D.G."/>
            <person name="Yokoyama S."/>
        </authorList>
    </citation>
    <scope>X-RAY CRYSTALLOGRAPHY (2.9 ANGSTROMS) IN COMPLEX WITH TRNA(VAL) AND VAL-AMP ANALOG</scope>
    <scope>INTERACTION OF COILED-COIL DOMAIN WITH TRNA</scope>
    <scope>KINETIC PARAMETERS</scope>
    <scope>MUTAGENESIS OF ARG-818 AND ARG-843</scope>
</reference>
<reference evidence="12 13" key="4">
    <citation type="journal article" date="2005" name="J. Biol. Chem.">
        <title>Structural basis for non-cognate amino acid discrimination by the valyl-tRNA synthetase editing domain.</title>
        <authorList>
            <person name="Fukunaga R."/>
            <person name="Yokoyama S."/>
        </authorList>
    </citation>
    <scope>X-RAY CRYSTALLOGRAPHY (1.7 ANGSTROMS) OF 195-337 IN COMPLEX WITH THR-AMP ANALOG</scope>
    <scope>MUTAGENESIS OF ARG-216; PHE-264; LYS-270; THR-272; ASP-276 AND ASP-279</scope>
</reference>
<protein>
    <recommendedName>
        <fullName>Valine--tRNA ligase</fullName>
        <ecNumber>6.1.1.9</ecNumber>
    </recommendedName>
    <alternativeName>
        <fullName>Valyl-tRNA synthetase</fullName>
        <shortName>ValRS</shortName>
    </alternativeName>
</protein>
<comment type="function">
    <text>Catalyzes the attachment of valine to tRNA(Val). As ValRS can inadvertently accommodate and process structurally similar amino acids such as threonine, to avoid such errors, it has a 'posttransfer' editing activity that hydrolyzes mischarged Thr-tRNA(Val) in a tRNA-dependent manner.</text>
</comment>
<comment type="catalytic activity">
    <reaction>
        <text>tRNA(Val) + L-valine + ATP = L-valyl-tRNA(Val) + AMP + diphosphate</text>
        <dbReference type="Rhea" id="RHEA:10704"/>
        <dbReference type="Rhea" id="RHEA-COMP:9672"/>
        <dbReference type="Rhea" id="RHEA-COMP:9708"/>
        <dbReference type="ChEBI" id="CHEBI:30616"/>
        <dbReference type="ChEBI" id="CHEBI:33019"/>
        <dbReference type="ChEBI" id="CHEBI:57762"/>
        <dbReference type="ChEBI" id="CHEBI:78442"/>
        <dbReference type="ChEBI" id="CHEBI:78537"/>
        <dbReference type="ChEBI" id="CHEBI:456215"/>
        <dbReference type="EC" id="6.1.1.9"/>
    </reaction>
</comment>
<comment type="cofactor">
    <cofactor>
        <name>Zn(2+)</name>
        <dbReference type="ChEBI" id="CHEBI:29105"/>
    </cofactor>
    <text>Binds 2 Zn(2+) ions per subunit.</text>
</comment>
<comment type="biophysicochemical properties">
    <kinetics>
        <KM evidence="4">0.7 uM for tRNA(Val)</KM>
    </kinetics>
</comment>
<comment type="subunit">
    <text evidence="3 4 5">Monomer.</text>
</comment>
<comment type="subcellular location">
    <subcellularLocation>
        <location>Cytoplasm</location>
    </subcellularLocation>
</comment>
<comment type="domain">
    <text>ValRS has two distinct active sites: one for aminoacylation and one for editing. The misactivated threonine is translocated from the active site to the editing site.</text>
</comment>
<comment type="domain">
    <text>The C-terminal coiled-coil domain is crucial for aminoacylation activity.</text>
</comment>
<comment type="similarity">
    <text evidence="6">Belongs to the class-I aminoacyl-tRNA synthetase family. ValS type 1 subfamily.</text>
</comment>
<dbReference type="EC" id="6.1.1.9"/>
<dbReference type="EMBL" id="AB080140">
    <property type="protein sequence ID" value="BAB85225.1"/>
    <property type="molecule type" value="Genomic_DNA"/>
</dbReference>
<dbReference type="RefSeq" id="WP_011228487.1">
    <property type="nucleotide sequence ID" value="NZ_DFSU01000140.1"/>
</dbReference>
<dbReference type="PDB" id="1GAX">
    <property type="method" value="X-ray"/>
    <property type="resolution" value="2.90 A"/>
    <property type="chains" value="A/B=1-862"/>
</dbReference>
<dbReference type="PDB" id="1IVS">
    <property type="method" value="X-ray"/>
    <property type="resolution" value="2.90 A"/>
    <property type="chains" value="A/B=1-862"/>
</dbReference>
<dbReference type="PDB" id="1IYW">
    <property type="method" value="X-ray"/>
    <property type="resolution" value="4.00 A"/>
    <property type="chains" value="A/B=1-862"/>
</dbReference>
<dbReference type="PDB" id="1WK9">
    <property type="method" value="X-ray"/>
    <property type="resolution" value="1.75 A"/>
    <property type="chains" value="A=193-337"/>
</dbReference>
<dbReference type="PDB" id="1WKA">
    <property type="method" value="X-ray"/>
    <property type="resolution" value="1.70 A"/>
    <property type="chains" value="A=193-338"/>
</dbReference>
<dbReference type="PDBsum" id="1GAX"/>
<dbReference type="PDBsum" id="1IVS"/>
<dbReference type="PDBsum" id="1IYW"/>
<dbReference type="PDBsum" id="1WK9"/>
<dbReference type="PDBsum" id="1WKA"/>
<dbReference type="SMR" id="P96142"/>
<dbReference type="BRENDA" id="6.1.1.9">
    <property type="organism ID" value="2305"/>
</dbReference>
<dbReference type="SABIO-RK" id="P96142"/>
<dbReference type="EvolutionaryTrace" id="P96142"/>
<dbReference type="GO" id="GO:0005829">
    <property type="term" value="C:cytosol"/>
    <property type="evidence" value="ECO:0007669"/>
    <property type="project" value="TreeGrafter"/>
</dbReference>
<dbReference type="GO" id="GO:0002161">
    <property type="term" value="F:aminoacyl-tRNA deacylase activity"/>
    <property type="evidence" value="ECO:0007669"/>
    <property type="project" value="InterPro"/>
</dbReference>
<dbReference type="GO" id="GO:0005524">
    <property type="term" value="F:ATP binding"/>
    <property type="evidence" value="ECO:0007669"/>
    <property type="project" value="UniProtKB-UniRule"/>
</dbReference>
<dbReference type="GO" id="GO:0046872">
    <property type="term" value="F:metal ion binding"/>
    <property type="evidence" value="ECO:0007669"/>
    <property type="project" value="UniProtKB-KW"/>
</dbReference>
<dbReference type="GO" id="GO:0004832">
    <property type="term" value="F:valine-tRNA ligase activity"/>
    <property type="evidence" value="ECO:0007669"/>
    <property type="project" value="UniProtKB-UniRule"/>
</dbReference>
<dbReference type="GO" id="GO:0006438">
    <property type="term" value="P:valyl-tRNA aminoacylation"/>
    <property type="evidence" value="ECO:0007669"/>
    <property type="project" value="UniProtKB-UniRule"/>
</dbReference>
<dbReference type="CDD" id="cd07962">
    <property type="entry name" value="Anticodon_Ia_Val"/>
    <property type="match status" value="1"/>
</dbReference>
<dbReference type="CDD" id="cd00817">
    <property type="entry name" value="ValRS_core"/>
    <property type="match status" value="1"/>
</dbReference>
<dbReference type="FunFam" id="3.40.50.620:FF:000020">
    <property type="entry name" value="Valine--tRNA ligase, mitochondrial"/>
    <property type="match status" value="1"/>
</dbReference>
<dbReference type="Gene3D" id="3.30.1170.10">
    <property type="match status" value="1"/>
</dbReference>
<dbReference type="Gene3D" id="3.40.50.620">
    <property type="entry name" value="HUPs"/>
    <property type="match status" value="2"/>
</dbReference>
<dbReference type="Gene3D" id="1.10.730.10">
    <property type="entry name" value="Isoleucyl-tRNA Synthetase, Domain 1"/>
    <property type="match status" value="1"/>
</dbReference>
<dbReference type="Gene3D" id="1.10.287.380">
    <property type="entry name" value="Valyl-tRNA synthetase, C-terminal domain"/>
    <property type="match status" value="1"/>
</dbReference>
<dbReference type="Gene3D" id="3.90.740.10">
    <property type="entry name" value="Valyl/Leucyl/Isoleucyl-tRNA synthetase, editing domain"/>
    <property type="match status" value="1"/>
</dbReference>
<dbReference type="HAMAP" id="MF_02004">
    <property type="entry name" value="Val_tRNA_synth_type1"/>
    <property type="match status" value="1"/>
</dbReference>
<dbReference type="InterPro" id="IPR001412">
    <property type="entry name" value="aa-tRNA-synth_I_CS"/>
</dbReference>
<dbReference type="InterPro" id="IPR002300">
    <property type="entry name" value="aa-tRNA-synth_Ia"/>
</dbReference>
<dbReference type="InterPro" id="IPR033705">
    <property type="entry name" value="Anticodon_Ia_Val"/>
</dbReference>
<dbReference type="InterPro" id="IPR013155">
    <property type="entry name" value="M/V/L/I-tRNA-synth_anticd-bd"/>
</dbReference>
<dbReference type="InterPro" id="IPR014729">
    <property type="entry name" value="Rossmann-like_a/b/a_fold"/>
</dbReference>
<dbReference type="InterPro" id="IPR010978">
    <property type="entry name" value="tRNA-bd_arm"/>
</dbReference>
<dbReference type="InterPro" id="IPR009080">
    <property type="entry name" value="tRNAsynth_Ia_anticodon-bd"/>
</dbReference>
<dbReference type="InterPro" id="IPR037118">
    <property type="entry name" value="Val-tRNA_synth_C_sf"/>
</dbReference>
<dbReference type="InterPro" id="IPR019499">
    <property type="entry name" value="Val-tRNA_synth_tRNA-bd"/>
</dbReference>
<dbReference type="InterPro" id="IPR009008">
    <property type="entry name" value="Val/Leu/Ile-tRNA-synth_edit"/>
</dbReference>
<dbReference type="InterPro" id="IPR002303">
    <property type="entry name" value="Valyl-tRNA_ligase"/>
</dbReference>
<dbReference type="NCBIfam" id="NF004349">
    <property type="entry name" value="PRK05729.1"/>
    <property type="match status" value="1"/>
</dbReference>
<dbReference type="NCBIfam" id="TIGR00422">
    <property type="entry name" value="valS"/>
    <property type="match status" value="1"/>
</dbReference>
<dbReference type="PANTHER" id="PTHR11946:SF93">
    <property type="entry name" value="VALINE--TRNA LIGASE, CHLOROPLASTIC_MITOCHONDRIAL 2"/>
    <property type="match status" value="1"/>
</dbReference>
<dbReference type="PANTHER" id="PTHR11946">
    <property type="entry name" value="VALYL-TRNA SYNTHETASES"/>
    <property type="match status" value="1"/>
</dbReference>
<dbReference type="Pfam" id="PF08264">
    <property type="entry name" value="Anticodon_1"/>
    <property type="match status" value="1"/>
</dbReference>
<dbReference type="Pfam" id="PF00133">
    <property type="entry name" value="tRNA-synt_1"/>
    <property type="match status" value="1"/>
</dbReference>
<dbReference type="Pfam" id="PF10458">
    <property type="entry name" value="Val_tRNA-synt_C"/>
    <property type="match status" value="1"/>
</dbReference>
<dbReference type="PRINTS" id="PR00986">
    <property type="entry name" value="TRNASYNTHVAL"/>
</dbReference>
<dbReference type="SUPFAM" id="SSF47323">
    <property type="entry name" value="Anticodon-binding domain of a subclass of class I aminoacyl-tRNA synthetases"/>
    <property type="match status" value="1"/>
</dbReference>
<dbReference type="SUPFAM" id="SSF52374">
    <property type="entry name" value="Nucleotidylyl transferase"/>
    <property type="match status" value="1"/>
</dbReference>
<dbReference type="SUPFAM" id="SSF46589">
    <property type="entry name" value="tRNA-binding arm"/>
    <property type="match status" value="1"/>
</dbReference>
<dbReference type="SUPFAM" id="SSF50677">
    <property type="entry name" value="ValRS/IleRS/LeuRS editing domain"/>
    <property type="match status" value="1"/>
</dbReference>
<dbReference type="PROSITE" id="PS00178">
    <property type="entry name" value="AA_TRNA_LIGASE_I"/>
    <property type="match status" value="1"/>
</dbReference>
<proteinExistence type="evidence at protein level"/>
<gene>
    <name type="primary">valS</name>
</gene>
<accession>P96142</accession>
<accession>Q54A82</accession>
<feature type="chain" id="PRO_0000106240" description="Valine--tRNA ligase">
    <location>
        <begin position="1"/>
        <end position="862"/>
    </location>
</feature>
<feature type="region of interest" description="Interaction with tRNA">
    <location>
        <begin position="576"/>
        <end position="587"/>
    </location>
</feature>
<feature type="region of interest" description="Interaction with tRNA">
    <location>
        <begin position="646"/>
        <end position="651"/>
    </location>
</feature>
<feature type="region of interest" description="Interaction with tRNA">
    <location>
        <begin position="815"/>
        <end position="847"/>
    </location>
</feature>
<feature type="coiled-coil region" evidence="2">
    <location>
        <begin position="802"/>
        <end position="862"/>
    </location>
</feature>
<feature type="short sequence motif" description="'HIGH' region">
    <location>
        <begin position="44"/>
        <end position="53"/>
    </location>
</feature>
<feature type="short sequence motif" description="'KMSKS' region">
    <location>
        <begin position="528"/>
        <end position="532"/>
    </location>
</feature>
<feature type="binding site" evidence="7 8 9 10">
    <location>
        <position position="42"/>
    </location>
    <ligand>
        <name>L-valine</name>
        <dbReference type="ChEBI" id="CHEBI:57762"/>
    </ligand>
</feature>
<feature type="binding site" evidence="7 8 9 10">
    <location>
        <position position="44"/>
    </location>
    <ligand>
        <name>L-valine</name>
        <dbReference type="ChEBI" id="CHEBI:57762"/>
    </ligand>
</feature>
<feature type="binding site" evidence="7 8 9 10">
    <location>
        <position position="50"/>
    </location>
    <ligand>
        <name>AMP</name>
        <dbReference type="ChEBI" id="CHEBI:456215"/>
    </ligand>
</feature>
<feature type="binding site" evidence="7 8 9 10">
    <location>
        <position position="53"/>
    </location>
    <ligand>
        <name>AMP</name>
        <dbReference type="ChEBI" id="CHEBI:456215"/>
    </ligand>
</feature>
<feature type="binding site" evidence="7 8 9 10">
    <location>
        <position position="81"/>
    </location>
    <ligand>
        <name>L-valine</name>
        <dbReference type="ChEBI" id="CHEBI:57762"/>
    </ligand>
</feature>
<feature type="binding site">
    <location>
        <position position="176"/>
    </location>
    <ligand>
        <name>Zn(2+)</name>
        <dbReference type="ChEBI" id="CHEBI:29105"/>
        <label>1</label>
    </ligand>
</feature>
<feature type="binding site">
    <location>
        <position position="179"/>
    </location>
    <ligand>
        <name>Zn(2+)</name>
        <dbReference type="ChEBI" id="CHEBI:29105"/>
        <label>1</label>
    </ligand>
</feature>
<feature type="binding site">
    <location>
        <position position="344"/>
    </location>
    <ligand>
        <name>Zn(2+)</name>
        <dbReference type="ChEBI" id="CHEBI:29105"/>
        <label>1</label>
    </ligand>
</feature>
<feature type="binding site">
    <location>
        <position position="347"/>
    </location>
    <ligand>
        <name>Zn(2+)</name>
        <dbReference type="ChEBI" id="CHEBI:29105"/>
        <label>1</label>
    </ligand>
</feature>
<feature type="binding site">
    <location>
        <position position="417"/>
    </location>
    <ligand>
        <name>Zn(2+)</name>
        <dbReference type="ChEBI" id="CHEBI:29105"/>
        <label>2</label>
    </ligand>
</feature>
<feature type="binding site">
    <location>
        <position position="420"/>
    </location>
    <ligand>
        <name>Zn(2+)</name>
        <dbReference type="ChEBI" id="CHEBI:29105"/>
        <label>2</label>
    </ligand>
</feature>
<feature type="binding site">
    <location>
        <position position="438"/>
    </location>
    <ligand>
        <name>Zn(2+)</name>
        <dbReference type="ChEBI" id="CHEBI:29105"/>
        <label>2</label>
    </ligand>
</feature>
<feature type="binding site">
    <location>
        <position position="441"/>
    </location>
    <ligand>
        <name>Zn(2+)</name>
        <dbReference type="ChEBI" id="CHEBI:29105"/>
        <label>2</label>
    </ligand>
</feature>
<feature type="binding site" evidence="7 8 9 10">
    <location>
        <position position="487"/>
    </location>
    <ligand>
        <name>AMP</name>
        <dbReference type="ChEBI" id="CHEBI:456215"/>
    </ligand>
</feature>
<feature type="binding site" evidence="7 8 9 10">
    <location>
        <position position="488"/>
    </location>
    <ligand>
        <name>AMP</name>
        <dbReference type="ChEBI" id="CHEBI:456215"/>
    </ligand>
</feature>
<feature type="binding site" evidence="7 8 9 10">
    <location>
        <position position="490"/>
    </location>
    <ligand>
        <name>AMP</name>
        <dbReference type="ChEBI" id="CHEBI:456215"/>
    </ligand>
</feature>
<feature type="binding site" evidence="7 8 9 10">
    <location>
        <position position="518"/>
    </location>
    <ligand>
        <name>AMP</name>
        <dbReference type="ChEBI" id="CHEBI:456215"/>
    </ligand>
</feature>
<feature type="binding site" evidence="7 8 9 10">
    <location>
        <position position="521"/>
    </location>
    <ligand>
        <name>AMP</name>
        <dbReference type="ChEBI" id="CHEBI:456215"/>
    </ligand>
</feature>
<feature type="binding site" evidence="7 8 9 10">
    <location>
        <position position="529"/>
    </location>
    <ligand>
        <name>AMP</name>
        <dbReference type="ChEBI" id="CHEBI:456215"/>
    </ligand>
</feature>
<feature type="binding site" evidence="1">
    <location>
        <position position="531"/>
    </location>
    <ligand>
        <name>ATP</name>
        <dbReference type="ChEBI" id="CHEBI:30616"/>
    </ligand>
</feature>
<feature type="site" description="Interaction with tRNA">
    <location>
        <position position="570"/>
    </location>
</feature>
<feature type="mutagenesis site" description="Decrease in posttransfer editing activity. No change in aminoacylation activity." evidence="5">
    <original>R</original>
    <variation>A</variation>
    <location>
        <position position="216"/>
    </location>
</feature>
<feature type="mutagenesis site" description="Decrease in posttransfer editing activity. No change in aminoacylation activity." evidence="5">
    <original>F</original>
    <variation>A</variation>
    <location>
        <position position="264"/>
    </location>
</feature>
<feature type="mutagenesis site" description="Strong decrease in posttransfer editing activity. Slight decrease in Val-tRNA(Val) formation, which could be due to deacylation of the synthesized Val-tRNA(Val)." evidence="5">
    <original>K</original>
    <variation>A</variation>
    <location>
        <position position="270"/>
    </location>
</feature>
<feature type="mutagenesis site" description="Decrease in posttransfer editing activity. No change in aminoacylation activity." evidence="5">
    <original>T</original>
    <variation>A</variation>
    <location>
        <position position="272"/>
    </location>
</feature>
<feature type="mutagenesis site" description="No change in aminoacylation and posttransfer editing activities." evidence="5">
    <original>D</original>
    <variation>A</variation>
    <location>
        <position position="276"/>
    </location>
</feature>
<feature type="mutagenesis site" description="Strong decrease in posttransfer editing activity. No change in aminoacylation activity." evidence="5">
    <original>D</original>
    <variation>A</variation>
    <location>
        <position position="279"/>
    </location>
</feature>
<feature type="mutagenesis site" description="Increase in KM for tRNA(Val), without change in kcat; when associated with A-843." evidence="4">
    <original>R</original>
    <variation>A</variation>
    <location>
        <position position="818"/>
    </location>
</feature>
<feature type="mutagenesis site" description="Increase in KM for tRNA(Val), without change in kcat; when associated with A-818." evidence="4">
    <original>R</original>
    <variation>A</variation>
    <location>
        <position position="843"/>
    </location>
</feature>
<feature type="helix" evidence="14">
    <location>
        <begin position="9"/>
        <end position="11"/>
    </location>
</feature>
<feature type="helix" evidence="14">
    <location>
        <begin position="13"/>
        <end position="22"/>
    </location>
</feature>
<feature type="strand" evidence="14">
    <location>
        <begin position="35"/>
        <end position="39"/>
    </location>
</feature>
<feature type="strand" evidence="14">
    <location>
        <begin position="44"/>
        <end position="47"/>
    </location>
</feature>
<feature type="helix" evidence="14">
    <location>
        <begin position="51"/>
        <end position="68"/>
    </location>
</feature>
<feature type="turn" evidence="14">
    <location>
        <begin position="69"/>
        <end position="71"/>
    </location>
</feature>
<feature type="strand" evidence="14">
    <location>
        <begin position="72"/>
        <end position="77"/>
    </location>
</feature>
<feature type="strand" evidence="14">
    <location>
        <begin position="79"/>
        <end position="81"/>
    </location>
</feature>
<feature type="helix" evidence="14">
    <location>
        <begin position="85"/>
        <end position="92"/>
    </location>
</feature>
<feature type="turn" evidence="14">
    <location>
        <begin position="93"/>
        <end position="99"/>
    </location>
</feature>
<feature type="helix" evidence="15">
    <location>
        <begin position="102"/>
        <end position="104"/>
    </location>
</feature>
<feature type="turn" evidence="15">
    <location>
        <begin position="106"/>
        <end position="108"/>
    </location>
</feature>
<feature type="helix" evidence="14">
    <location>
        <begin position="109"/>
        <end position="131"/>
    </location>
</feature>
<feature type="helix" evidence="14">
    <location>
        <begin position="138"/>
        <end position="140"/>
    </location>
</feature>
<feature type="helix" evidence="14">
    <location>
        <begin position="147"/>
        <end position="161"/>
    </location>
</feature>
<feature type="strand" evidence="14">
    <location>
        <begin position="164"/>
        <end position="169"/>
    </location>
</feature>
<feature type="strand" evidence="14">
    <location>
        <begin position="172"/>
        <end position="176"/>
    </location>
</feature>
<feature type="turn" evidence="14">
    <location>
        <begin position="177"/>
        <end position="180"/>
    </location>
</feature>
<feature type="strand" evidence="14">
    <location>
        <begin position="181"/>
        <end position="183"/>
    </location>
</feature>
<feature type="helix" evidence="14">
    <location>
        <begin position="185"/>
        <end position="187"/>
    </location>
</feature>
<feature type="strand" evidence="14">
    <location>
        <begin position="188"/>
        <end position="190"/>
    </location>
</feature>
<feature type="strand" evidence="16">
    <location>
        <begin position="196"/>
        <end position="204"/>
    </location>
</feature>
<feature type="strand" evidence="14">
    <location>
        <begin position="205"/>
        <end position="207"/>
    </location>
</feature>
<feature type="strand" evidence="16">
    <location>
        <begin position="209"/>
        <end position="215"/>
    </location>
</feature>
<feature type="helix" evidence="16">
    <location>
        <begin position="217"/>
        <end position="222"/>
    </location>
</feature>
<feature type="strand" evidence="16">
    <location>
        <begin position="225"/>
        <end position="228"/>
    </location>
</feature>
<feature type="turn" evidence="16">
    <location>
        <begin position="233"/>
        <end position="235"/>
    </location>
</feature>
<feature type="helix" evidence="16">
    <location>
        <begin position="236"/>
        <end position="238"/>
    </location>
</feature>
<feature type="strand" evidence="16">
    <location>
        <begin position="242"/>
        <end position="244"/>
    </location>
</feature>
<feature type="strand" evidence="16">
    <location>
        <begin position="251"/>
        <end position="256"/>
    </location>
</feature>
<feature type="strand" evidence="16">
    <location>
        <begin position="267"/>
        <end position="271"/>
    </location>
</feature>
<feature type="turn" evidence="16">
    <location>
        <begin position="273"/>
        <end position="275"/>
    </location>
</feature>
<feature type="helix" evidence="16">
    <location>
        <begin position="277"/>
        <end position="286"/>
    </location>
</feature>
<feature type="strand" evidence="15">
    <location>
        <begin position="293"/>
        <end position="295"/>
    </location>
</feature>
<feature type="strand" evidence="16">
    <location>
        <begin position="298"/>
        <end position="300"/>
    </location>
</feature>
<feature type="strand" evidence="14">
    <location>
        <begin position="302"/>
        <end position="305"/>
    </location>
</feature>
<feature type="helix" evidence="16">
    <location>
        <begin position="307"/>
        <end position="309"/>
    </location>
</feature>
<feature type="helix" evidence="16">
    <location>
        <begin position="314"/>
        <end position="327"/>
    </location>
</feature>
<feature type="strand" evidence="16">
    <location>
        <begin position="331"/>
        <end position="336"/>
    </location>
</feature>
<feature type="strand" evidence="14">
    <location>
        <begin position="342"/>
        <end position="344"/>
    </location>
</feature>
<feature type="turn" evidence="14">
    <location>
        <begin position="345"/>
        <end position="347"/>
    </location>
</feature>
<feature type="strand" evidence="14">
    <location>
        <begin position="353"/>
        <end position="355"/>
    </location>
</feature>
<feature type="strand" evidence="14">
    <location>
        <begin position="358"/>
        <end position="361"/>
    </location>
</feature>
<feature type="helix" evidence="14">
    <location>
        <begin position="363"/>
        <end position="376"/>
    </location>
</feature>
<feature type="strand" evidence="14">
    <location>
        <begin position="380"/>
        <end position="384"/>
    </location>
</feature>
<feature type="helix" evidence="14">
    <location>
        <begin position="386"/>
        <end position="395"/>
    </location>
</feature>
<feature type="strand" evidence="14">
    <location>
        <begin position="407"/>
        <end position="409"/>
    </location>
</feature>
<feature type="strand" evidence="14">
    <location>
        <begin position="415"/>
        <end position="417"/>
    </location>
</feature>
<feature type="turn" evidence="14">
    <location>
        <begin position="418"/>
        <end position="420"/>
    </location>
</feature>
<feature type="helix" evidence="14">
    <location>
        <begin position="428"/>
        <end position="430"/>
    </location>
</feature>
<feature type="turn" evidence="14">
    <location>
        <begin position="439"/>
        <end position="441"/>
    </location>
</feature>
<feature type="strand" evidence="14">
    <location>
        <begin position="446"/>
        <end position="448"/>
    </location>
</feature>
<feature type="helix" evidence="14">
    <location>
        <begin position="455"/>
        <end position="459"/>
    </location>
</feature>
<feature type="helix" evidence="14">
    <location>
        <begin position="465"/>
        <end position="467"/>
    </location>
</feature>
<feature type="turn" evidence="14">
    <location>
        <begin position="468"/>
        <end position="470"/>
    </location>
</feature>
<feature type="helix" evidence="14">
    <location>
        <begin position="474"/>
        <end position="478"/>
    </location>
</feature>
<feature type="strand" evidence="14">
    <location>
        <begin position="481"/>
        <end position="483"/>
    </location>
</feature>
<feature type="strand" evidence="14">
    <location>
        <begin position="485"/>
        <end position="488"/>
    </location>
</feature>
<feature type="helix" evidence="14">
    <location>
        <begin position="489"/>
        <end position="491"/>
    </location>
</feature>
<feature type="turn" evidence="14">
    <location>
        <begin position="492"/>
        <end position="495"/>
    </location>
</feature>
<feature type="helix" evidence="14">
    <location>
        <begin position="496"/>
        <end position="506"/>
    </location>
</feature>
<feature type="strand" evidence="14">
    <location>
        <begin position="507"/>
        <end position="509"/>
    </location>
</feature>
<feature type="strand" evidence="14">
    <location>
        <begin position="511"/>
        <end position="518"/>
    </location>
</feature>
<feature type="strand" evidence="15">
    <location>
        <begin position="526"/>
        <end position="528"/>
    </location>
</feature>
<feature type="turn" evidence="14">
    <location>
        <begin position="531"/>
        <end position="534"/>
    </location>
</feature>
<feature type="helix" evidence="14">
    <location>
        <begin position="539"/>
        <end position="546"/>
    </location>
</feature>
<feature type="helix" evidence="14">
    <location>
        <begin position="548"/>
        <end position="558"/>
    </location>
</feature>
<feature type="helix" evidence="14">
    <location>
        <begin position="569"/>
        <end position="592"/>
    </location>
</feature>
<feature type="strand" evidence="14">
    <location>
        <begin position="593"/>
        <end position="595"/>
    </location>
</feature>
<feature type="helix" evidence="14">
    <location>
        <begin position="605"/>
        <end position="625"/>
    </location>
</feature>
<feature type="turn" evidence="14">
    <location>
        <begin position="626"/>
        <end position="628"/>
    </location>
</feature>
<feature type="helix" evidence="14">
    <location>
        <begin position="630"/>
        <end position="644"/>
    </location>
</feature>
<feature type="turn" evidence="14">
    <location>
        <begin position="645"/>
        <end position="648"/>
    </location>
</feature>
<feature type="helix" evidence="14">
    <location>
        <begin position="649"/>
        <end position="658"/>
    </location>
</feature>
<feature type="helix" evidence="14">
    <location>
        <begin position="662"/>
        <end position="679"/>
    </location>
</feature>
<feature type="turn" evidence="14">
    <location>
        <begin position="680"/>
        <end position="682"/>
    </location>
</feature>
<feature type="helix" evidence="14">
    <location>
        <begin position="684"/>
        <end position="695"/>
    </location>
</feature>
<feature type="helix" evidence="14">
    <location>
        <begin position="700"/>
        <end position="702"/>
    </location>
</feature>
<feature type="helix" evidence="14">
    <location>
        <begin position="713"/>
        <end position="736"/>
    </location>
</feature>
<feature type="strand" evidence="14">
    <location>
        <begin position="744"/>
        <end position="751"/>
    </location>
</feature>
<feature type="helix" evidence="14">
    <location>
        <begin position="753"/>
        <end position="757"/>
    </location>
</feature>
<feature type="helix" evidence="14">
    <location>
        <begin position="759"/>
        <end position="766"/>
    </location>
</feature>
<feature type="strand" evidence="14">
    <location>
        <begin position="768"/>
        <end position="770"/>
    </location>
</feature>
<feature type="strand" evidence="14">
    <location>
        <begin position="776"/>
        <end position="782"/>
    </location>
</feature>
<feature type="strand" evidence="14">
    <location>
        <begin position="784"/>
        <end position="791"/>
    </location>
</feature>
<feature type="helix" evidence="14">
    <location>
        <begin position="798"/>
        <end position="823"/>
    </location>
</feature>
<feature type="turn" evidence="14">
    <location>
        <begin position="826"/>
        <end position="828"/>
    </location>
</feature>
<feature type="strand" evidence="14">
    <location>
        <begin position="829"/>
        <end position="832"/>
    </location>
</feature>
<feature type="helix" evidence="14">
    <location>
        <begin position="836"/>
        <end position="860"/>
    </location>
</feature>
<evidence type="ECO:0000250" key="1"/>
<evidence type="ECO:0000255" key="2"/>
<evidence type="ECO:0000269" key="3">
    <source>
    </source>
</evidence>
<evidence type="ECO:0000269" key="4">
    <source>
    </source>
</evidence>
<evidence type="ECO:0000269" key="5">
    <source>
    </source>
</evidence>
<evidence type="ECO:0000305" key="6"/>
<evidence type="ECO:0000305" key="7">
    <source>
    </source>
</evidence>
<evidence type="ECO:0000305" key="8">
    <source>
    </source>
</evidence>
<evidence type="ECO:0007744" key="9">
    <source>
        <dbReference type="PDB" id="1GAX"/>
    </source>
</evidence>
<evidence type="ECO:0007744" key="10">
    <source>
        <dbReference type="PDB" id="1IVS"/>
    </source>
</evidence>
<evidence type="ECO:0007744" key="11">
    <source>
        <dbReference type="PDB" id="1IYW"/>
    </source>
</evidence>
<evidence type="ECO:0007744" key="12">
    <source>
        <dbReference type="PDB" id="1WK9"/>
    </source>
</evidence>
<evidence type="ECO:0007744" key="13">
    <source>
        <dbReference type="PDB" id="1WKA"/>
    </source>
</evidence>
<evidence type="ECO:0007829" key="14">
    <source>
        <dbReference type="PDB" id="1GAX"/>
    </source>
</evidence>
<evidence type="ECO:0007829" key="15">
    <source>
        <dbReference type="PDB" id="1IVS"/>
    </source>
</evidence>
<evidence type="ECO:0007829" key="16">
    <source>
        <dbReference type="PDB" id="1WKA"/>
    </source>
</evidence>
<name>SYV_THETH</name>